<protein>
    <recommendedName>
        <fullName evidence="1">Chaperonin GroEL</fullName>
        <ecNumber evidence="1">5.6.1.7</ecNumber>
    </recommendedName>
    <alternativeName>
        <fullName evidence="1">60 kDa chaperonin</fullName>
    </alternativeName>
    <alternativeName>
        <fullName evidence="1">Chaperonin-60</fullName>
        <shortName evidence="1">Cpn60</shortName>
    </alternativeName>
</protein>
<dbReference type="EC" id="5.6.1.7" evidence="1"/>
<dbReference type="EMBL" id="CP000744">
    <property type="protein sequence ID" value="ABR83794.1"/>
    <property type="molecule type" value="Genomic_DNA"/>
</dbReference>
<dbReference type="RefSeq" id="WP_012077175.1">
    <property type="nucleotide sequence ID" value="NC_009656.1"/>
</dbReference>
<dbReference type="SMR" id="A6VB57"/>
<dbReference type="GeneID" id="77222885"/>
<dbReference type="KEGG" id="pap:PSPA7_4956"/>
<dbReference type="HOGENOM" id="CLU_016503_3_0_6"/>
<dbReference type="Proteomes" id="UP000001582">
    <property type="component" value="Chromosome"/>
</dbReference>
<dbReference type="GO" id="GO:0005737">
    <property type="term" value="C:cytoplasm"/>
    <property type="evidence" value="ECO:0007669"/>
    <property type="project" value="UniProtKB-SubCell"/>
</dbReference>
<dbReference type="GO" id="GO:0005524">
    <property type="term" value="F:ATP binding"/>
    <property type="evidence" value="ECO:0007669"/>
    <property type="project" value="UniProtKB-UniRule"/>
</dbReference>
<dbReference type="GO" id="GO:0140662">
    <property type="term" value="F:ATP-dependent protein folding chaperone"/>
    <property type="evidence" value="ECO:0007669"/>
    <property type="project" value="InterPro"/>
</dbReference>
<dbReference type="GO" id="GO:0016853">
    <property type="term" value="F:isomerase activity"/>
    <property type="evidence" value="ECO:0007669"/>
    <property type="project" value="UniProtKB-KW"/>
</dbReference>
<dbReference type="GO" id="GO:0051082">
    <property type="term" value="F:unfolded protein binding"/>
    <property type="evidence" value="ECO:0007669"/>
    <property type="project" value="UniProtKB-UniRule"/>
</dbReference>
<dbReference type="GO" id="GO:0042026">
    <property type="term" value="P:protein refolding"/>
    <property type="evidence" value="ECO:0007669"/>
    <property type="project" value="UniProtKB-UniRule"/>
</dbReference>
<dbReference type="CDD" id="cd03344">
    <property type="entry name" value="GroEL"/>
    <property type="match status" value="1"/>
</dbReference>
<dbReference type="FunFam" id="1.10.560.10:FF:000001">
    <property type="entry name" value="60 kDa chaperonin"/>
    <property type="match status" value="1"/>
</dbReference>
<dbReference type="FunFam" id="3.50.7.10:FF:000001">
    <property type="entry name" value="60 kDa chaperonin"/>
    <property type="match status" value="1"/>
</dbReference>
<dbReference type="Gene3D" id="3.50.7.10">
    <property type="entry name" value="GroEL"/>
    <property type="match status" value="1"/>
</dbReference>
<dbReference type="Gene3D" id="1.10.560.10">
    <property type="entry name" value="GroEL-like equatorial domain"/>
    <property type="match status" value="1"/>
</dbReference>
<dbReference type="Gene3D" id="3.30.260.10">
    <property type="entry name" value="TCP-1-like chaperonin intermediate domain"/>
    <property type="match status" value="1"/>
</dbReference>
<dbReference type="HAMAP" id="MF_00600">
    <property type="entry name" value="CH60"/>
    <property type="match status" value="1"/>
</dbReference>
<dbReference type="InterPro" id="IPR018370">
    <property type="entry name" value="Chaperonin_Cpn60_CS"/>
</dbReference>
<dbReference type="InterPro" id="IPR001844">
    <property type="entry name" value="Cpn60/GroEL"/>
</dbReference>
<dbReference type="InterPro" id="IPR002423">
    <property type="entry name" value="Cpn60/GroEL/TCP-1"/>
</dbReference>
<dbReference type="InterPro" id="IPR027409">
    <property type="entry name" value="GroEL-like_apical_dom_sf"/>
</dbReference>
<dbReference type="InterPro" id="IPR027413">
    <property type="entry name" value="GROEL-like_equatorial_sf"/>
</dbReference>
<dbReference type="InterPro" id="IPR027410">
    <property type="entry name" value="TCP-1-like_intermed_sf"/>
</dbReference>
<dbReference type="NCBIfam" id="TIGR02348">
    <property type="entry name" value="GroEL"/>
    <property type="match status" value="1"/>
</dbReference>
<dbReference type="NCBIfam" id="NF000592">
    <property type="entry name" value="PRK00013.1"/>
    <property type="match status" value="1"/>
</dbReference>
<dbReference type="NCBIfam" id="NF009487">
    <property type="entry name" value="PRK12849.1"/>
    <property type="match status" value="1"/>
</dbReference>
<dbReference type="NCBIfam" id="NF009488">
    <property type="entry name" value="PRK12850.1"/>
    <property type="match status" value="1"/>
</dbReference>
<dbReference type="NCBIfam" id="NF009489">
    <property type="entry name" value="PRK12851.1"/>
    <property type="match status" value="1"/>
</dbReference>
<dbReference type="PANTHER" id="PTHR45633">
    <property type="entry name" value="60 KDA HEAT SHOCK PROTEIN, MITOCHONDRIAL"/>
    <property type="match status" value="1"/>
</dbReference>
<dbReference type="Pfam" id="PF00118">
    <property type="entry name" value="Cpn60_TCP1"/>
    <property type="match status" value="1"/>
</dbReference>
<dbReference type="PRINTS" id="PR00298">
    <property type="entry name" value="CHAPERONIN60"/>
</dbReference>
<dbReference type="SUPFAM" id="SSF52029">
    <property type="entry name" value="GroEL apical domain-like"/>
    <property type="match status" value="1"/>
</dbReference>
<dbReference type="SUPFAM" id="SSF48592">
    <property type="entry name" value="GroEL equatorial domain-like"/>
    <property type="match status" value="1"/>
</dbReference>
<dbReference type="SUPFAM" id="SSF54849">
    <property type="entry name" value="GroEL-intermediate domain like"/>
    <property type="match status" value="1"/>
</dbReference>
<dbReference type="PROSITE" id="PS00296">
    <property type="entry name" value="CHAPERONINS_CPN60"/>
    <property type="match status" value="1"/>
</dbReference>
<evidence type="ECO:0000255" key="1">
    <source>
        <dbReference type="HAMAP-Rule" id="MF_00600"/>
    </source>
</evidence>
<organism>
    <name type="scientific">Pseudomonas paraeruginosa (strain DSM 24068 / PA7)</name>
    <name type="common">Pseudomonas aeruginosa (strain PA7)</name>
    <dbReference type="NCBI Taxonomy" id="381754"/>
    <lineage>
        <taxon>Bacteria</taxon>
        <taxon>Pseudomonadati</taxon>
        <taxon>Pseudomonadota</taxon>
        <taxon>Gammaproteobacteria</taxon>
        <taxon>Pseudomonadales</taxon>
        <taxon>Pseudomonadaceae</taxon>
        <taxon>Pseudomonas</taxon>
        <taxon>Pseudomonas paraeruginosa</taxon>
    </lineage>
</organism>
<name>CH60_PSEP7</name>
<comment type="function">
    <text evidence="1">Together with its co-chaperonin GroES, plays an essential role in assisting protein folding. The GroEL-GroES system forms a nano-cage that allows encapsulation of the non-native substrate proteins and provides a physical environment optimized to promote and accelerate protein folding.</text>
</comment>
<comment type="catalytic activity">
    <reaction evidence="1">
        <text>ATP + H2O + a folded polypeptide = ADP + phosphate + an unfolded polypeptide.</text>
        <dbReference type="EC" id="5.6.1.7"/>
    </reaction>
</comment>
<comment type="subunit">
    <text evidence="1">Forms a cylinder of 14 subunits composed of two heptameric rings stacked back-to-back. Interacts with the co-chaperonin GroES.</text>
</comment>
<comment type="subcellular location">
    <subcellularLocation>
        <location evidence="1">Cytoplasm</location>
    </subcellularLocation>
</comment>
<comment type="similarity">
    <text evidence="1">Belongs to the chaperonin (HSP60) family.</text>
</comment>
<sequence length="547" mass="57070">MAAKEVKFGDSARKKMLVGVNVLADAVKATLGPKGRNVVLDKSFGAPTITKDGVSVAKEIELKDKFENMGAQLVKDVASKANDAAGDGTTTATVLAQAIVNEGLKAVAAGMNPMDLKRGIDKATVAIVAQLKELAKPCADTKAIAQVGTISANSDESIGQIIAEAMEKVGKEGVITVEEGSGLENELSVVEGMQFDRGYLSPYFVNKPDTMAAELDSPLLLLVDKKISNIREMLPVLEAVAKAGRPLLIVAEDVEGEALATLVVNNMRGIVKVAAVKAPGFGDRRKAMLQDIAILTGGTVISEEVGLSLEGATLEHLGNAKRVVINKENTTIIDGAGVQADIEARVLQIRKQIEETTSDYDREKLQERLAKLAGGVAVIKVGAATEVEMKEKKARVEDALHATRAAVEEGVVPGGGVALVRALQAIEGLKGDNEEQNVGIALLRRAVEAPLRQIVANAGDEPSVVVDKVKQGSGNYGFNAATGVYGDMIEMGILDPAKVTRSALQAAASIGGLMITTEAMVAEIVEDKPAMGGMPDMGGMGGMGGMM</sequence>
<reference key="1">
    <citation type="submission" date="2007-06" db="EMBL/GenBank/DDBJ databases">
        <authorList>
            <person name="Dodson R.J."/>
            <person name="Harkins D."/>
            <person name="Paulsen I.T."/>
        </authorList>
    </citation>
    <scope>NUCLEOTIDE SEQUENCE [LARGE SCALE GENOMIC DNA]</scope>
    <source>
        <strain>DSM 24068 / PA7</strain>
    </source>
</reference>
<accession>A6VB57</accession>
<gene>
    <name evidence="1" type="primary">groEL</name>
    <name evidence="1" type="synonym">groL</name>
    <name type="ordered locus">PSPA7_4956</name>
</gene>
<proteinExistence type="inferred from homology"/>
<keyword id="KW-0067">ATP-binding</keyword>
<keyword id="KW-0143">Chaperone</keyword>
<keyword id="KW-0963">Cytoplasm</keyword>
<keyword id="KW-0413">Isomerase</keyword>
<keyword id="KW-0547">Nucleotide-binding</keyword>
<feature type="chain" id="PRO_1000025818" description="Chaperonin GroEL">
    <location>
        <begin position="1"/>
        <end position="547"/>
    </location>
</feature>
<feature type="binding site" evidence="1">
    <location>
        <begin position="30"/>
        <end position="33"/>
    </location>
    <ligand>
        <name>ATP</name>
        <dbReference type="ChEBI" id="CHEBI:30616"/>
    </ligand>
</feature>
<feature type="binding site" evidence="1">
    <location>
        <position position="51"/>
    </location>
    <ligand>
        <name>ATP</name>
        <dbReference type="ChEBI" id="CHEBI:30616"/>
    </ligand>
</feature>
<feature type="binding site" evidence="1">
    <location>
        <begin position="87"/>
        <end position="91"/>
    </location>
    <ligand>
        <name>ATP</name>
        <dbReference type="ChEBI" id="CHEBI:30616"/>
    </ligand>
</feature>
<feature type="binding site" evidence="1">
    <location>
        <position position="415"/>
    </location>
    <ligand>
        <name>ATP</name>
        <dbReference type="ChEBI" id="CHEBI:30616"/>
    </ligand>
</feature>
<feature type="binding site" evidence="1">
    <location>
        <begin position="479"/>
        <end position="481"/>
    </location>
    <ligand>
        <name>ATP</name>
        <dbReference type="ChEBI" id="CHEBI:30616"/>
    </ligand>
</feature>
<feature type="binding site" evidence="1">
    <location>
        <position position="495"/>
    </location>
    <ligand>
        <name>ATP</name>
        <dbReference type="ChEBI" id="CHEBI:30616"/>
    </ligand>
</feature>